<feature type="chain" id="PRO_1000148876" description="Thiosulfate sulfurtransferase GlpE">
    <location>
        <begin position="1"/>
        <end position="106"/>
    </location>
</feature>
<feature type="domain" description="Rhodanese" evidence="1">
    <location>
        <begin position="17"/>
        <end position="105"/>
    </location>
</feature>
<feature type="active site" description="Cysteine persulfide intermediate" evidence="1">
    <location>
        <position position="65"/>
    </location>
</feature>
<reference key="1">
    <citation type="journal article" date="2008" name="PLoS ONE">
        <title>A recalibrated molecular clock and independent origins for the cholera pandemic clones.</title>
        <authorList>
            <person name="Feng L."/>
            <person name="Reeves P.R."/>
            <person name="Lan R."/>
            <person name="Ren Y."/>
            <person name="Gao C."/>
            <person name="Zhou Z."/>
            <person name="Ren Y."/>
            <person name="Cheng J."/>
            <person name="Wang W."/>
            <person name="Wang J."/>
            <person name="Qian W."/>
            <person name="Li D."/>
            <person name="Wang L."/>
        </authorList>
    </citation>
    <scope>NUCLEOTIDE SEQUENCE [LARGE SCALE GENOMIC DNA]</scope>
    <source>
        <strain>M66-2</strain>
    </source>
</reference>
<proteinExistence type="inferred from homology"/>
<comment type="function">
    <text evidence="1">Transferase that catalyzes the transfer of sulfur from thiosulfate to thiophilic acceptors such as cyanide or dithiols. May function in a CysM-independent thiosulfate assimilation pathway by catalyzing the conversion of thiosulfate to sulfite, which can then be used for L-cysteine biosynthesis.</text>
</comment>
<comment type="catalytic activity">
    <reaction evidence="1">
        <text>thiosulfate + hydrogen cyanide = thiocyanate + sulfite + 2 H(+)</text>
        <dbReference type="Rhea" id="RHEA:16881"/>
        <dbReference type="ChEBI" id="CHEBI:15378"/>
        <dbReference type="ChEBI" id="CHEBI:17359"/>
        <dbReference type="ChEBI" id="CHEBI:18022"/>
        <dbReference type="ChEBI" id="CHEBI:18407"/>
        <dbReference type="ChEBI" id="CHEBI:33542"/>
        <dbReference type="EC" id="2.8.1.1"/>
    </reaction>
</comment>
<comment type="catalytic activity">
    <reaction evidence="1">
        <text>thiosulfate + [thioredoxin]-dithiol = [thioredoxin]-disulfide + hydrogen sulfide + sulfite + 2 H(+)</text>
        <dbReference type="Rhea" id="RHEA:83859"/>
        <dbReference type="Rhea" id="RHEA-COMP:10698"/>
        <dbReference type="Rhea" id="RHEA-COMP:10700"/>
        <dbReference type="ChEBI" id="CHEBI:15378"/>
        <dbReference type="ChEBI" id="CHEBI:17359"/>
        <dbReference type="ChEBI" id="CHEBI:29919"/>
        <dbReference type="ChEBI" id="CHEBI:29950"/>
        <dbReference type="ChEBI" id="CHEBI:33542"/>
        <dbReference type="ChEBI" id="CHEBI:50058"/>
    </reaction>
</comment>
<comment type="subcellular location">
    <subcellularLocation>
        <location evidence="1">Cytoplasm</location>
    </subcellularLocation>
</comment>
<comment type="similarity">
    <text evidence="1">Belongs to the GlpE family.</text>
</comment>
<gene>
    <name evidence="1" type="primary">glpE</name>
    <name type="ordered locus">VCM66_0100</name>
</gene>
<organism>
    <name type="scientific">Vibrio cholerae serotype O1 (strain M66-2)</name>
    <dbReference type="NCBI Taxonomy" id="579112"/>
    <lineage>
        <taxon>Bacteria</taxon>
        <taxon>Pseudomonadati</taxon>
        <taxon>Pseudomonadota</taxon>
        <taxon>Gammaproteobacteria</taxon>
        <taxon>Vibrionales</taxon>
        <taxon>Vibrionaceae</taxon>
        <taxon>Vibrio</taxon>
    </lineage>
</organism>
<accession>C3LPU2</accession>
<evidence type="ECO:0000255" key="1">
    <source>
        <dbReference type="HAMAP-Rule" id="MF_01009"/>
    </source>
</evidence>
<keyword id="KW-0963">Cytoplasm</keyword>
<keyword id="KW-0808">Transferase</keyword>
<name>GLPE_VIBCM</name>
<sequence length="106" mass="12023">MDHFLHIDVNAAQAMMEQKQAHLVDIRDPQSFQLAHAKNAYHLTNQSMVQFMEQAEFDQPVLVMCYHGISSQGAAQYLVNQGFEEVYSVDGGFEAWHRANLPIEAS</sequence>
<protein>
    <recommendedName>
        <fullName evidence="1">Thiosulfate sulfurtransferase GlpE</fullName>
        <ecNumber evidence="1">2.8.1.1</ecNumber>
    </recommendedName>
</protein>
<dbReference type="EC" id="2.8.1.1" evidence="1"/>
<dbReference type="EMBL" id="CP001233">
    <property type="protein sequence ID" value="ACP04436.1"/>
    <property type="molecule type" value="Genomic_DNA"/>
</dbReference>
<dbReference type="RefSeq" id="WP_000349528.1">
    <property type="nucleotide sequence ID" value="NC_012578.1"/>
</dbReference>
<dbReference type="SMR" id="C3LPU2"/>
<dbReference type="GeneID" id="89513194"/>
<dbReference type="KEGG" id="vcm:VCM66_0100"/>
<dbReference type="HOGENOM" id="CLU_089574_14_0_6"/>
<dbReference type="Proteomes" id="UP000001217">
    <property type="component" value="Chromosome I"/>
</dbReference>
<dbReference type="GO" id="GO:0005737">
    <property type="term" value="C:cytoplasm"/>
    <property type="evidence" value="ECO:0007669"/>
    <property type="project" value="UniProtKB-SubCell"/>
</dbReference>
<dbReference type="GO" id="GO:0004792">
    <property type="term" value="F:thiosulfate-cyanide sulfurtransferase activity"/>
    <property type="evidence" value="ECO:0007669"/>
    <property type="project" value="UniProtKB-UniRule"/>
</dbReference>
<dbReference type="GO" id="GO:0006071">
    <property type="term" value="P:glycerol metabolic process"/>
    <property type="evidence" value="ECO:0007669"/>
    <property type="project" value="UniProtKB-UniRule"/>
</dbReference>
<dbReference type="CDD" id="cd01444">
    <property type="entry name" value="GlpE_ST"/>
    <property type="match status" value="1"/>
</dbReference>
<dbReference type="FunFam" id="3.40.250.10:FF:000007">
    <property type="entry name" value="Thiosulfate sulfurtransferase GlpE"/>
    <property type="match status" value="1"/>
</dbReference>
<dbReference type="Gene3D" id="3.40.250.10">
    <property type="entry name" value="Rhodanese-like domain"/>
    <property type="match status" value="1"/>
</dbReference>
<dbReference type="HAMAP" id="MF_01009">
    <property type="entry name" value="Thiosulf_sulfurtr"/>
    <property type="match status" value="1"/>
</dbReference>
<dbReference type="InterPro" id="IPR050229">
    <property type="entry name" value="GlpE_sulfurtransferase"/>
</dbReference>
<dbReference type="InterPro" id="IPR001763">
    <property type="entry name" value="Rhodanese-like_dom"/>
</dbReference>
<dbReference type="InterPro" id="IPR036873">
    <property type="entry name" value="Rhodanese-like_dom_sf"/>
</dbReference>
<dbReference type="InterPro" id="IPR023695">
    <property type="entry name" value="Thiosulf_sulfurTrfase"/>
</dbReference>
<dbReference type="NCBIfam" id="NF001195">
    <property type="entry name" value="PRK00162.1"/>
    <property type="match status" value="1"/>
</dbReference>
<dbReference type="PANTHER" id="PTHR43031">
    <property type="entry name" value="FAD-DEPENDENT OXIDOREDUCTASE"/>
    <property type="match status" value="1"/>
</dbReference>
<dbReference type="PANTHER" id="PTHR43031:SF6">
    <property type="entry name" value="THIOSULFATE SULFURTRANSFERASE GLPE"/>
    <property type="match status" value="1"/>
</dbReference>
<dbReference type="Pfam" id="PF00581">
    <property type="entry name" value="Rhodanese"/>
    <property type="match status" value="1"/>
</dbReference>
<dbReference type="SMART" id="SM00450">
    <property type="entry name" value="RHOD"/>
    <property type="match status" value="1"/>
</dbReference>
<dbReference type="SUPFAM" id="SSF52821">
    <property type="entry name" value="Rhodanese/Cell cycle control phosphatase"/>
    <property type="match status" value="1"/>
</dbReference>
<dbReference type="PROSITE" id="PS50206">
    <property type="entry name" value="RHODANESE_3"/>
    <property type="match status" value="1"/>
</dbReference>